<reference key="1">
    <citation type="journal article" date="1998" name="Virus Genes">
        <title>Nucleotide and predicted amino acid sequences of all genes encoded by the 3' genomic portion (9.5 kb) of respiratory bovine coronaviruses and comparisons among respiratory and enteric coronaviruses.</title>
        <authorList>
            <person name="Chouljenko V.N."/>
            <person name="Kousoulas K.G."/>
            <person name="Lin X.Q."/>
            <person name="Storz J."/>
        </authorList>
    </citation>
    <scope>NUCLEOTIDE SEQUENCE [GENOMIC RNA]</scope>
    <source>
        <strain>Isolate LSU-94LSS-051-2</strain>
    </source>
</reference>
<sequence length="1363" mass="150515">MFLILLISLPTAFAVIGDLKCTTVSINDVDTGVPSISTDTVDVTNGLGTYYVLDRVYLNTTLLLNGYYPTSGSTYRNMALKGTLLLSTLWFKPPFLSDFTNGIFAKVKNTKVIKDGVKYSEFPAITIGSTFVNTSYSVVVQPHTTNLDNKLQGLLEISVCQYTMCEYPNTICNPNLGNQRVELWHWDTGVVSCLYKRNFTYDVNADYLYFHFYQEGGTFYAYFTDTGVVTKFLFNVYLGTVLSHYYVMPLTCNSALTLEYWVTPLTSKQYLLAFNQDGVIFNAVDCKSDFMSEIKCKTLSIAPSTGVYELNGYTVQPIADVYRRIPNLPDCNIEAWLNDKSVPSPLNWERKTFSNCNFNMSSLMSFIQADSFTCNNIDAAKIYGMCFSSITIDKFAIPNGRKVDLQLGNLGYLQSFNYRIDTTATSCQLYYNLPAANVSVSRFNPSTWNRRFGFTEQSVFKPQPAGVFTDHDVVYAQHCFKAPTNFCPCKLDGSLCVGSGSGIDAGYKNTGIGTCPAGTNYLTCHNAAQCGCLCTPDPITSKATGPYKCPQTKYLVGIGEHCSGLAIKSDYCGGNPCSCQPQAFLGWSVDSCLQGDRCNIFANFILHDVNSGTTCSTDLQKSNTDIILGVCVNYDLYGITGQGIFVEVNATYYNSWQNLLYDSNGNLYGFRDYLTNRTFMIRSCYSGRVSAAFHANSSEPALLFRNFKCNYVFNNTLSRQLQPINYFDSYLGCVVNADNSTSSVVQTCDLTVGSGYCVDYSTKRRSRRSITTGYRFTNFEPFTVNSVNDSLEPVGGLYEIQIPSEFTIGNMEEFIQTSSPKVTIDCSAFVCGDYAACKSQLVEYGSFCDNINAILTEVNELLDTTQLQVANSLMNGVTLSTKLKDGVNFNVDDINFSPVLGCLGSDCNKVSSRSAIEDLLFSKVKLSDVGFVEAYNNCTGGAEIRDLICVQSYNGIKVLPPLLSENQISGYTLAATSASLFPPWSAAAGVPFYLNVQYRINGIGVTMDVLSQNQKLIANAFNNALGAIQEGFDATNSALVKIQAVVNANAEALNNLLQQLSNRFGAISSSLQEILSRLDALEAQAQIDRLINGRLTALNAYVSQQLSDSTLVKFSAAQAMEKVNECVKSQSSRINFCGNGNHIISLVQNAPYGLYFIHFSYVPTKYVTAKVSPGLCIAGDRGIAPKSGYFVNVNNTWMFTGSGYYYPEPITGNNVVVMSTCAVNYTKAPDVMLNISTPNLPDFKEELDQWFKNQTSVAPDLSLDYINVTFLDLQDEMNRLQEAIKVLNQSYINLKDIGTYEYYVKWPWYVWLLIGFAGVAMLVLLFFICCCTGCGTSCFKKCGGCCDDYTGHQELVIKTSHDD</sequence>
<organism>
    <name type="scientific">Bovine coronavirus (strain LSU-94LSS-051)</name>
    <name type="common">BCoV-LSU</name>
    <name type="synonym">BCV</name>
    <dbReference type="NCBI Taxonomy" id="233261"/>
    <lineage>
        <taxon>Viruses</taxon>
        <taxon>Riboviria</taxon>
        <taxon>Orthornavirae</taxon>
        <taxon>Pisuviricota</taxon>
        <taxon>Pisoniviricetes</taxon>
        <taxon>Nidovirales</taxon>
        <taxon>Cornidovirineae</taxon>
        <taxon>Coronaviridae</taxon>
        <taxon>Orthocoronavirinae</taxon>
        <taxon>Betacoronavirus</taxon>
        <taxon>Embecovirus</taxon>
        <taxon>Betacoronavirus 1</taxon>
    </lineage>
</organism>
<feature type="signal peptide" evidence="2">
    <location>
        <begin position="1"/>
        <end position="13"/>
    </location>
</feature>
<feature type="chain" id="PRO_0000283910" description="Spike glycoprotein">
    <location>
        <begin position="14"/>
        <end position="1363"/>
    </location>
</feature>
<feature type="chain" id="PRO_0000283911" description="Spike protein S1">
    <location>
        <begin position="14"/>
        <end position="768"/>
    </location>
</feature>
<feature type="chain" id="PRO_0000283912" description="Spike protein S2">
    <location>
        <begin position="769"/>
        <end position="1363"/>
    </location>
</feature>
<feature type="chain" id="PRO_0000444071" description="Spike protein S2'" evidence="2">
    <location>
        <begin position="914"/>
        <end position="1363"/>
    </location>
</feature>
<feature type="topological domain" description="Extracellular" evidence="2">
    <location>
        <begin position="14"/>
        <end position="1307"/>
    </location>
</feature>
<feature type="transmembrane region" description="Helical" evidence="2">
    <location>
        <begin position="1308"/>
        <end position="1328"/>
    </location>
</feature>
<feature type="topological domain" description="Cytoplasmic" evidence="2">
    <location>
        <begin position="1329"/>
        <end position="1363"/>
    </location>
</feature>
<feature type="domain" description="BetaCoV S1-NTD" evidence="4">
    <location>
        <begin position="15"/>
        <end position="298"/>
    </location>
</feature>
<feature type="domain" description="BetaCoV S1-CTD" evidence="3">
    <location>
        <begin position="329"/>
        <end position="617"/>
    </location>
</feature>
<feature type="region of interest" description="Fusion peptide 1" evidence="2">
    <location>
        <begin position="914"/>
        <end position="935"/>
    </location>
</feature>
<feature type="region of interest" description="Fusion peptide 2" evidence="2">
    <location>
        <begin position="933"/>
        <end position="953"/>
    </location>
</feature>
<feature type="region of interest" description="Heptad repeat 1" evidence="2">
    <location>
        <begin position="1014"/>
        <end position="1064"/>
    </location>
</feature>
<feature type="region of interest" description="Heptad repeat 2" evidence="2">
    <location>
        <begin position="1258"/>
        <end position="1296"/>
    </location>
</feature>
<feature type="coiled-coil region" evidence="2">
    <location>
        <begin position="1043"/>
        <end position="1087"/>
    </location>
</feature>
<feature type="coiled-coil region" evidence="2">
    <location>
        <begin position="1269"/>
        <end position="1297"/>
    </location>
</feature>
<feature type="short sequence motif" description="KxHxx" evidence="2">
    <location>
        <begin position="1359"/>
        <end position="1363"/>
    </location>
</feature>
<feature type="site" description="Cleavage; by host" evidence="1">
    <location>
        <begin position="768"/>
        <end position="769"/>
    </location>
</feature>
<feature type="site" description="Cleavage" evidence="2">
    <location>
        <begin position="913"/>
        <end position="914"/>
    </location>
</feature>
<feature type="glycosylation site" description="N-linked (GlcNAc...) asparagine; by host" evidence="2">
    <location>
        <position position="59"/>
    </location>
</feature>
<feature type="glycosylation site" description="N-linked (GlcNAc...) asparagine; by host" evidence="2">
    <location>
        <position position="133"/>
    </location>
</feature>
<feature type="glycosylation site" description="N-linked (GlcNAc...) asparagine; by host" evidence="2">
    <location>
        <position position="198"/>
    </location>
</feature>
<feature type="glycosylation site" description="N-linked (GlcNAc...) asparagine; by host" evidence="2">
    <location>
        <position position="359"/>
    </location>
</feature>
<feature type="glycosylation site" description="N-linked (GlcNAc...) asparagine; by host" evidence="2">
    <location>
        <position position="437"/>
    </location>
</feature>
<feature type="glycosylation site" description="N-linked (GlcNAc...) asparagine; by host" evidence="2">
    <location>
        <position position="649"/>
    </location>
</feature>
<feature type="glycosylation site" description="N-linked (GlcNAc...) asparagine; by host" evidence="2">
    <location>
        <position position="676"/>
    </location>
</feature>
<feature type="glycosylation site" description="N-linked (GlcNAc...) asparagine; by host" evidence="2">
    <location>
        <position position="696"/>
    </location>
</feature>
<feature type="glycosylation site" description="N-linked (GlcNAc...) asparagine; by host" evidence="2">
    <location>
        <position position="714"/>
    </location>
</feature>
<feature type="glycosylation site" description="N-linked (GlcNAc...) asparagine; by host" evidence="2">
    <location>
        <position position="739"/>
    </location>
</feature>
<feature type="glycosylation site" description="N-linked (GlcNAc...) asparagine; by host" evidence="2">
    <location>
        <position position="788"/>
    </location>
</feature>
<feature type="glycosylation site" description="N-linked (GlcNAc...) asparagine; by host" evidence="2">
    <location>
        <position position="937"/>
    </location>
</feature>
<feature type="glycosylation site" description="N-linked (GlcNAc...) asparagine; by host" evidence="2">
    <location>
        <position position="1194"/>
    </location>
</feature>
<feature type="glycosylation site" description="N-linked (GlcNAc...) asparagine; by host" evidence="2">
    <location>
        <position position="1224"/>
    </location>
</feature>
<feature type="glycosylation site" description="N-linked (GlcNAc...) asparagine; by host" evidence="2">
    <location>
        <position position="1234"/>
    </location>
</feature>
<feature type="glycosylation site" description="N-linked (GlcNAc...) asparagine; by host" evidence="2">
    <location>
        <position position="1253"/>
    </location>
</feature>
<feature type="glycosylation site" description="N-linked (GlcNAc...) asparagine; by host" evidence="2">
    <location>
        <position position="1267"/>
    </location>
</feature>
<feature type="glycosylation site" description="N-linked (GlcNAc...) asparagine; by host" evidence="2">
    <location>
        <position position="1288"/>
    </location>
</feature>
<feature type="disulfide bond" evidence="4">
    <location>
        <begin position="21"/>
        <end position="165"/>
    </location>
</feature>
<feature type="disulfide bond" evidence="4">
    <location>
        <begin position="160"/>
        <end position="193"/>
    </location>
</feature>
<feature type="disulfide bond" evidence="4">
    <location>
        <begin position="172"/>
        <end position="252"/>
    </location>
</feature>
<feature type="disulfide bond" evidence="4">
    <location>
        <begin position="286"/>
        <end position="296"/>
    </location>
</feature>
<feature type="disulfide bond" evidence="3">
    <location>
        <begin position="331"/>
        <end position="356"/>
    </location>
</feature>
<feature type="disulfide bond" evidence="3">
    <location>
        <begin position="374"/>
        <end position="427"/>
    </location>
</feature>
<feature type="disulfide bond" evidence="3">
    <location>
        <begin position="386"/>
        <end position="615"/>
    </location>
</feature>
<feature type="disulfide bond" evidence="2">
    <location>
        <begin position="938"/>
        <end position="949"/>
    </location>
</feature>
<proteinExistence type="inferred from homology"/>
<organismHost>
    <name type="scientific">Bos taurus</name>
    <name type="common">Bovine</name>
    <dbReference type="NCBI Taxonomy" id="9913"/>
</organismHost>
<evidence type="ECO:0000250" key="1"/>
<evidence type="ECO:0000255" key="2">
    <source>
        <dbReference type="HAMAP-Rule" id="MF_04099"/>
    </source>
</evidence>
<evidence type="ECO:0000255" key="3">
    <source>
        <dbReference type="PROSITE-ProRule" id="PRU01269"/>
    </source>
</evidence>
<evidence type="ECO:0000255" key="4">
    <source>
        <dbReference type="PROSITE-ProRule" id="PRU01270"/>
    </source>
</evidence>
<name>SPIKE_CVBLS</name>
<protein>
    <recommendedName>
        <fullName evidence="2">Spike glycoprotein</fullName>
        <shortName evidence="2">S glycoprotein</shortName>
    </recommendedName>
    <alternativeName>
        <fullName evidence="2">E2</fullName>
    </alternativeName>
    <alternativeName>
        <fullName evidence="2">Peplomer protein</fullName>
    </alternativeName>
    <component>
        <recommendedName>
            <fullName evidence="2">Spike protein S1</fullName>
        </recommendedName>
    </component>
    <component>
        <recommendedName>
            <fullName evidence="2">Spike protein S2</fullName>
        </recommendedName>
    </component>
    <component>
        <recommendedName>
            <fullName evidence="2">Spike protein S2'</fullName>
        </recommendedName>
    </component>
</protein>
<comment type="function">
    <molecule>Spike protein S1</molecule>
    <text evidence="2">Attaches the virion to the cell membrane by interacting with host receptor, initiating the infection.</text>
</comment>
<comment type="function">
    <molecule>Spike protein S2</molecule>
    <text evidence="2">Mediates fusion of the virion and cellular membranes by acting as a class I viral fusion protein. Under the current model, the protein has at least three conformational states: pre-fusion native state, pre-hairpin intermediate state, and post-fusion hairpin state. During viral and target cell membrane fusion, the coiled coil regions (heptad repeats) assume a trimer-of-hairpins structure, positioning the fusion peptide in close proximity to the C-terminal region of the ectodomain. The formation of this structure appears to drive apposition and subsequent fusion of viral and target cell membranes.</text>
</comment>
<comment type="function">
    <molecule>Spike protein S2'</molecule>
    <text evidence="2">Acts as a viral fusion peptide which is unmasked following S2 cleavage occurring upon virus endocytosis.</text>
</comment>
<comment type="subunit">
    <text evidence="2">Homotrimer; each monomer consists of a S1 and a S2 subunit. The resulting peplomers protrude from the virus surface as spikes.</text>
</comment>
<comment type="subcellular location">
    <subcellularLocation>
        <location evidence="2">Virion membrane</location>
        <topology evidence="2">Single-pass type I membrane protein</topology>
    </subcellularLocation>
    <subcellularLocation>
        <location evidence="2">Host endoplasmic reticulum-Golgi intermediate compartment membrane</location>
        <topology evidence="2">Single-pass type I membrane protein</topology>
    </subcellularLocation>
    <subcellularLocation>
        <location evidence="2">Host cell membrane</location>
        <topology evidence="2">Single-pass type I membrane protein</topology>
    </subcellularLocation>
    <text evidence="2">Accumulates in the endoplasmic reticulum-Golgi intermediate compartment, where it participates in virus particle assembly. Some S oligomers are transported to the host plasma membrane, where they may mediate cell-cell fusion.</text>
</comment>
<comment type="domain">
    <text evidence="2">Fusion peptide 1 (FP1) and fusion peptide 2 (FP2) function cooperatively and have a membrane-ordering effect on lipid headgroups and shallow hydrophobic regions of target bilayers. They are considered as two domains of an extended, bipartite FP. The membrane-ordering activity is calcium-dependent and also dependent on correct folding, which is maintained by an internal disulfide bond in FP2.</text>
</comment>
<comment type="PTM">
    <text evidence="2">Specific enzymatic cleavages in vivo yield mature proteins. The precursor is processed into S1 and S2 by host cell furin or another cellular protease to yield the mature S1 and S2 proteins. Additionally, a second cleavage leads to the release of a fusion peptide after viral attachment to host cell receptor.</text>
</comment>
<comment type="PTM">
    <text evidence="2">The cytoplasmic Cys-rich domain is palmitoylated. Spike glycoprotein is digested within host endosomes.</text>
</comment>
<comment type="similarity">
    <text evidence="2">Belongs to the betacoronaviruses spike protein family.</text>
</comment>
<dbReference type="EMBL" id="AF058943">
    <property type="protein sequence ID" value="AAF25509.1"/>
    <property type="molecule type" value="Genomic_RNA"/>
</dbReference>
<dbReference type="SMR" id="Q9QAR5"/>
<dbReference type="GlyCosmos" id="Q9QAR5">
    <property type="glycosylation" value="18 sites, No reported glycans"/>
</dbReference>
<dbReference type="GO" id="GO:0044173">
    <property type="term" value="C:host cell endoplasmic reticulum-Golgi intermediate compartment membrane"/>
    <property type="evidence" value="ECO:0007669"/>
    <property type="project" value="UniProtKB-SubCell"/>
</dbReference>
<dbReference type="GO" id="GO:0020002">
    <property type="term" value="C:host cell plasma membrane"/>
    <property type="evidence" value="ECO:0007669"/>
    <property type="project" value="UniProtKB-SubCell"/>
</dbReference>
<dbReference type="GO" id="GO:0016020">
    <property type="term" value="C:membrane"/>
    <property type="evidence" value="ECO:0007669"/>
    <property type="project" value="UniProtKB-UniRule"/>
</dbReference>
<dbReference type="GO" id="GO:0019031">
    <property type="term" value="C:viral envelope"/>
    <property type="evidence" value="ECO:0007669"/>
    <property type="project" value="UniProtKB-UniRule"/>
</dbReference>
<dbReference type="GO" id="GO:0055036">
    <property type="term" value="C:virion membrane"/>
    <property type="evidence" value="ECO:0007669"/>
    <property type="project" value="UniProtKB-SubCell"/>
</dbReference>
<dbReference type="GO" id="GO:0075509">
    <property type="term" value="P:endocytosis involved in viral entry into host cell"/>
    <property type="evidence" value="ECO:0007669"/>
    <property type="project" value="UniProtKB-UniRule"/>
</dbReference>
<dbReference type="GO" id="GO:0039654">
    <property type="term" value="P:fusion of virus membrane with host endosome membrane"/>
    <property type="evidence" value="ECO:0007669"/>
    <property type="project" value="UniProtKB-UniRule"/>
</dbReference>
<dbReference type="GO" id="GO:0019064">
    <property type="term" value="P:fusion of virus membrane with host plasma membrane"/>
    <property type="evidence" value="ECO:0007669"/>
    <property type="project" value="UniProtKB-UniRule"/>
</dbReference>
<dbReference type="GO" id="GO:0046813">
    <property type="term" value="P:receptor-mediated virion attachment to host cell"/>
    <property type="evidence" value="ECO:0007669"/>
    <property type="project" value="UniProtKB-UniRule"/>
</dbReference>
<dbReference type="CDD" id="cd21485">
    <property type="entry name" value="HCoV-OC43-like_Spike_S1_RBD"/>
    <property type="match status" value="1"/>
</dbReference>
<dbReference type="CDD" id="cd22380">
    <property type="entry name" value="HKU1-CoV-like_Spike_SD1-2_S1-S2_S2"/>
    <property type="match status" value="1"/>
</dbReference>
<dbReference type="CDD" id="cd21625">
    <property type="entry name" value="MHV-like_Spike_S1_NTD"/>
    <property type="match status" value="1"/>
</dbReference>
<dbReference type="FunFam" id="1.20.5.300:FF:000003">
    <property type="entry name" value="Spike glycoprotein"/>
    <property type="match status" value="1"/>
</dbReference>
<dbReference type="FunFam" id="1.20.5.300:FF:000006">
    <property type="entry name" value="Spike glycoprotein"/>
    <property type="match status" value="1"/>
</dbReference>
<dbReference type="FunFam" id="2.60.120.960:FF:000002">
    <property type="entry name" value="Spike glycoprotein"/>
    <property type="match status" value="1"/>
</dbReference>
<dbReference type="FunFam" id="3.30.70.1840:FF:000003">
    <property type="entry name" value="Spike glycoprotein"/>
    <property type="match status" value="1"/>
</dbReference>
<dbReference type="Gene3D" id="1.20.5.300">
    <property type="match status" value="2"/>
</dbReference>
<dbReference type="Gene3D" id="3.30.70.1840">
    <property type="match status" value="1"/>
</dbReference>
<dbReference type="Gene3D" id="2.60.120.960">
    <property type="entry name" value="Spike glycoprotein, N-terminal domain"/>
    <property type="match status" value="1"/>
</dbReference>
<dbReference type="HAMAP" id="MF_04099">
    <property type="entry name" value="BETA_CORONA_SPIKE"/>
    <property type="match status" value="1"/>
</dbReference>
<dbReference type="InterPro" id="IPR032500">
    <property type="entry name" value="bCoV_S1_N"/>
</dbReference>
<dbReference type="InterPro" id="IPR042578">
    <property type="entry name" value="BETA_CORONA_SPIKE"/>
</dbReference>
<dbReference type="InterPro" id="IPR043607">
    <property type="entry name" value="CoV_S1_C"/>
</dbReference>
<dbReference type="InterPro" id="IPR043473">
    <property type="entry name" value="S2_sf_CoV"/>
</dbReference>
<dbReference type="InterPro" id="IPR043002">
    <property type="entry name" value="Spike_N_sf"/>
</dbReference>
<dbReference type="InterPro" id="IPR044339">
    <property type="entry name" value="Spike_S1_NTD_MHV-like"/>
</dbReference>
<dbReference type="InterPro" id="IPR018548">
    <property type="entry name" value="Spike_S1_RBD_bCoV"/>
</dbReference>
<dbReference type="InterPro" id="IPR044372">
    <property type="entry name" value="Spike_S1_RBD_HCoV-OC43-like"/>
</dbReference>
<dbReference type="InterPro" id="IPR036326">
    <property type="entry name" value="Spike_S1_RBD_sf_bCoV"/>
</dbReference>
<dbReference type="InterPro" id="IPR002552">
    <property type="entry name" value="Spike_S2_CoV"/>
</dbReference>
<dbReference type="InterPro" id="IPR043614">
    <property type="entry name" value="Spike_S2_CoV_C"/>
</dbReference>
<dbReference type="InterPro" id="IPR044873">
    <property type="entry name" value="Spike_S2_CoV_HR1"/>
</dbReference>
<dbReference type="InterPro" id="IPR044874">
    <property type="entry name" value="Spike_S2_CoV_HR2"/>
</dbReference>
<dbReference type="Pfam" id="PF16451">
    <property type="entry name" value="bCoV_S1_N"/>
    <property type="match status" value="1"/>
</dbReference>
<dbReference type="Pfam" id="PF09408">
    <property type="entry name" value="bCoV_S1_RBD"/>
    <property type="match status" value="1"/>
</dbReference>
<dbReference type="Pfam" id="PF19209">
    <property type="entry name" value="CoV_S1_C"/>
    <property type="match status" value="1"/>
</dbReference>
<dbReference type="Pfam" id="PF01601">
    <property type="entry name" value="CoV_S2"/>
    <property type="match status" value="1"/>
</dbReference>
<dbReference type="Pfam" id="PF19214">
    <property type="entry name" value="CoV_S2_C"/>
    <property type="match status" value="1"/>
</dbReference>
<dbReference type="SUPFAM" id="SSF111474">
    <property type="entry name" value="Coronavirus S2 glycoprotein"/>
    <property type="match status" value="2"/>
</dbReference>
<dbReference type="SUPFAM" id="SSF143587">
    <property type="entry name" value="SARS receptor-binding domain-like"/>
    <property type="match status" value="1"/>
</dbReference>
<dbReference type="PROSITE" id="PS51921">
    <property type="entry name" value="BCOV_S1_CTD"/>
    <property type="match status" value="1"/>
</dbReference>
<dbReference type="PROSITE" id="PS51922">
    <property type="entry name" value="BCOV_S1_NTD"/>
    <property type="match status" value="1"/>
</dbReference>
<dbReference type="PROSITE" id="PS51923">
    <property type="entry name" value="COV_S2_HR1"/>
    <property type="match status" value="1"/>
</dbReference>
<dbReference type="PROSITE" id="PS51924">
    <property type="entry name" value="COV_S2_HR2"/>
    <property type="match status" value="1"/>
</dbReference>
<gene>
    <name evidence="2" type="primary">S</name>
    <name type="ORF">3</name>
</gene>
<keyword id="KW-0175">Coiled coil</keyword>
<keyword id="KW-1015">Disulfide bond</keyword>
<keyword id="KW-1170">Fusion of virus membrane with host endosomal membrane</keyword>
<keyword id="KW-1168">Fusion of virus membrane with host membrane</keyword>
<keyword id="KW-0325">Glycoprotein</keyword>
<keyword id="KW-1032">Host cell membrane</keyword>
<keyword id="KW-1043">Host membrane</keyword>
<keyword id="KW-0945">Host-virus interaction</keyword>
<keyword id="KW-0449">Lipoprotein</keyword>
<keyword id="KW-0472">Membrane</keyword>
<keyword id="KW-0564">Palmitate</keyword>
<keyword id="KW-0732">Signal</keyword>
<keyword id="KW-0812">Transmembrane</keyword>
<keyword id="KW-1133">Transmembrane helix</keyword>
<keyword id="KW-1161">Viral attachment to host cell</keyword>
<keyword id="KW-0261">Viral envelope protein</keyword>
<keyword id="KW-1162">Viral penetration into host cytoplasm</keyword>
<keyword id="KW-0946">Virion</keyword>
<keyword id="KW-0843">Virulence</keyword>
<keyword id="KW-1160">Virus entry into host cell</keyword>
<accession>Q9QAR5</accession>